<protein>
    <recommendedName>
        <fullName evidence="1">Probable GTP-binding protein EngB</fullName>
    </recommendedName>
</protein>
<comment type="function">
    <text evidence="1">Necessary for normal cell division and for the maintenance of normal septation.</text>
</comment>
<comment type="cofactor">
    <cofactor evidence="1">
        <name>Mg(2+)</name>
        <dbReference type="ChEBI" id="CHEBI:18420"/>
    </cofactor>
</comment>
<comment type="similarity">
    <text evidence="1">Belongs to the TRAFAC class TrmE-Era-EngA-EngB-Septin-like GTPase superfamily. EngB GTPase family.</text>
</comment>
<evidence type="ECO:0000255" key="1">
    <source>
        <dbReference type="HAMAP-Rule" id="MF_00321"/>
    </source>
</evidence>
<proteinExistence type="inferred from homology"/>
<gene>
    <name evidence="1" type="primary">engB</name>
    <name type="ordered locus">NTHI1283</name>
</gene>
<organism>
    <name type="scientific">Haemophilus influenzae (strain 86-028NP)</name>
    <dbReference type="NCBI Taxonomy" id="281310"/>
    <lineage>
        <taxon>Bacteria</taxon>
        <taxon>Pseudomonadati</taxon>
        <taxon>Pseudomonadota</taxon>
        <taxon>Gammaproteobacteria</taxon>
        <taxon>Pasteurellales</taxon>
        <taxon>Pasteurellaceae</taxon>
        <taxon>Haemophilus</taxon>
    </lineage>
</organism>
<dbReference type="EMBL" id="CP000057">
    <property type="protein sequence ID" value="AAX88121.1"/>
    <property type="molecule type" value="Genomic_DNA"/>
</dbReference>
<dbReference type="RefSeq" id="WP_011272391.1">
    <property type="nucleotide sequence ID" value="NC_007146.2"/>
</dbReference>
<dbReference type="SMR" id="Q4QLH6"/>
<dbReference type="KEGG" id="hit:NTHI1283"/>
<dbReference type="HOGENOM" id="CLU_033732_1_0_6"/>
<dbReference type="Proteomes" id="UP000002525">
    <property type="component" value="Chromosome"/>
</dbReference>
<dbReference type="GO" id="GO:0005829">
    <property type="term" value="C:cytosol"/>
    <property type="evidence" value="ECO:0007669"/>
    <property type="project" value="TreeGrafter"/>
</dbReference>
<dbReference type="GO" id="GO:0005525">
    <property type="term" value="F:GTP binding"/>
    <property type="evidence" value="ECO:0007669"/>
    <property type="project" value="UniProtKB-UniRule"/>
</dbReference>
<dbReference type="GO" id="GO:0046872">
    <property type="term" value="F:metal ion binding"/>
    <property type="evidence" value="ECO:0007669"/>
    <property type="project" value="UniProtKB-KW"/>
</dbReference>
<dbReference type="GO" id="GO:0000917">
    <property type="term" value="P:division septum assembly"/>
    <property type="evidence" value="ECO:0007669"/>
    <property type="project" value="UniProtKB-KW"/>
</dbReference>
<dbReference type="CDD" id="cd01876">
    <property type="entry name" value="YihA_EngB"/>
    <property type="match status" value="1"/>
</dbReference>
<dbReference type="FunFam" id="3.40.50.300:FF:000098">
    <property type="entry name" value="Probable GTP-binding protein EngB"/>
    <property type="match status" value="1"/>
</dbReference>
<dbReference type="Gene3D" id="3.40.50.300">
    <property type="entry name" value="P-loop containing nucleotide triphosphate hydrolases"/>
    <property type="match status" value="1"/>
</dbReference>
<dbReference type="HAMAP" id="MF_00321">
    <property type="entry name" value="GTPase_EngB"/>
    <property type="match status" value="1"/>
</dbReference>
<dbReference type="InterPro" id="IPR030393">
    <property type="entry name" value="G_ENGB_dom"/>
</dbReference>
<dbReference type="InterPro" id="IPR006073">
    <property type="entry name" value="GTP-bd"/>
</dbReference>
<dbReference type="InterPro" id="IPR019987">
    <property type="entry name" value="GTP-bd_ribosome_bio_YsxC"/>
</dbReference>
<dbReference type="InterPro" id="IPR027417">
    <property type="entry name" value="P-loop_NTPase"/>
</dbReference>
<dbReference type="NCBIfam" id="TIGR03598">
    <property type="entry name" value="GTPase_YsxC"/>
    <property type="match status" value="1"/>
</dbReference>
<dbReference type="PANTHER" id="PTHR11649:SF13">
    <property type="entry name" value="ENGB-TYPE G DOMAIN-CONTAINING PROTEIN"/>
    <property type="match status" value="1"/>
</dbReference>
<dbReference type="PANTHER" id="PTHR11649">
    <property type="entry name" value="MSS1/TRME-RELATED GTP-BINDING PROTEIN"/>
    <property type="match status" value="1"/>
</dbReference>
<dbReference type="Pfam" id="PF01926">
    <property type="entry name" value="MMR_HSR1"/>
    <property type="match status" value="1"/>
</dbReference>
<dbReference type="SUPFAM" id="SSF52540">
    <property type="entry name" value="P-loop containing nucleoside triphosphate hydrolases"/>
    <property type="match status" value="1"/>
</dbReference>
<dbReference type="PROSITE" id="PS51706">
    <property type="entry name" value="G_ENGB"/>
    <property type="match status" value="1"/>
</dbReference>
<keyword id="KW-0131">Cell cycle</keyword>
<keyword id="KW-0132">Cell division</keyword>
<keyword id="KW-0342">GTP-binding</keyword>
<keyword id="KW-0460">Magnesium</keyword>
<keyword id="KW-0479">Metal-binding</keyword>
<keyword id="KW-0547">Nucleotide-binding</keyword>
<keyword id="KW-0717">Septation</keyword>
<feature type="chain" id="PRO_0000266871" description="Probable GTP-binding protein EngB">
    <location>
        <begin position="1"/>
        <end position="205"/>
    </location>
</feature>
<feature type="domain" description="EngB-type G" evidence="1">
    <location>
        <begin position="27"/>
        <end position="201"/>
    </location>
</feature>
<feature type="binding site" evidence="1">
    <location>
        <begin position="35"/>
        <end position="42"/>
    </location>
    <ligand>
        <name>GTP</name>
        <dbReference type="ChEBI" id="CHEBI:37565"/>
    </ligand>
</feature>
<feature type="binding site" evidence="1">
    <location>
        <position position="42"/>
    </location>
    <ligand>
        <name>Mg(2+)</name>
        <dbReference type="ChEBI" id="CHEBI:18420"/>
    </ligand>
</feature>
<feature type="binding site" evidence="1">
    <location>
        <begin position="62"/>
        <end position="66"/>
    </location>
    <ligand>
        <name>GTP</name>
        <dbReference type="ChEBI" id="CHEBI:37565"/>
    </ligand>
</feature>
<feature type="binding site" evidence="1">
    <location>
        <position position="64"/>
    </location>
    <ligand>
        <name>Mg(2+)</name>
        <dbReference type="ChEBI" id="CHEBI:18420"/>
    </ligand>
</feature>
<feature type="binding site" evidence="1">
    <location>
        <begin position="80"/>
        <end position="83"/>
    </location>
    <ligand>
        <name>GTP</name>
        <dbReference type="ChEBI" id="CHEBI:37565"/>
    </ligand>
</feature>
<feature type="binding site" evidence="1">
    <location>
        <begin position="147"/>
        <end position="150"/>
    </location>
    <ligand>
        <name>GTP</name>
        <dbReference type="ChEBI" id="CHEBI:37565"/>
    </ligand>
</feature>
<feature type="binding site" evidence="1">
    <location>
        <begin position="180"/>
        <end position="182"/>
    </location>
    <ligand>
        <name>GTP</name>
        <dbReference type="ChEBI" id="CHEBI:37565"/>
    </ligand>
</feature>
<reference key="1">
    <citation type="journal article" date="2005" name="J. Bacteriol.">
        <title>Genomic sequence of an otitis media isolate of nontypeable Haemophilus influenzae: comparative study with H. influenzae serotype d, strain KW20.</title>
        <authorList>
            <person name="Harrison A."/>
            <person name="Dyer D.W."/>
            <person name="Gillaspy A."/>
            <person name="Ray W.C."/>
            <person name="Mungur R."/>
            <person name="Carson M.B."/>
            <person name="Zhong H."/>
            <person name="Gipson J."/>
            <person name="Gipson M."/>
            <person name="Johnson L.S."/>
            <person name="Lewis L."/>
            <person name="Bakaletz L.O."/>
            <person name="Munson R.S. Jr."/>
        </authorList>
    </citation>
    <scope>NUCLEOTIDE SEQUENCE [LARGE SCALE GENOMIC DNA]</scope>
    <source>
        <strain>86-028NP</strain>
    </source>
</reference>
<accession>Q4QLH6</accession>
<name>ENGB_HAEI8</name>
<sequence length="205" mass="22910">MSEIKLNYHKTHFLTSAPNIRSIPEDTGIEIAFAGRSNAGKSTALNALTNQKNLARTSKTPGRTQLINLFEVEPNCKLVDLPGYGYAAVPEQMKIQWQKSLGEYLQKRECLAGLVVLMDIRHPLKDLDQQMIEWAVSANLPVLLLLTKADKLSQSARSKQVKMVREAILPFQGDIQVEAFSAQNKIGIDKLAAKLDFWFSPLFAK</sequence>